<comment type="function">
    <text evidence="2">Catalyzes the pyruvoyl-dependent decarboxylation of aspartate to produce beta-alanine.</text>
</comment>
<comment type="function">
    <text evidence="3">Overexpression of wild-type or mutant proteins confers resistance to pyrazinoic acid (POA), the active form of the anti-tuberculosis prodrug pyrazinamide (PZA), when grown on agar plates.</text>
</comment>
<comment type="catalytic activity">
    <reaction evidence="2">
        <text>L-aspartate + H(+) = beta-alanine + CO2</text>
        <dbReference type="Rhea" id="RHEA:19497"/>
        <dbReference type="ChEBI" id="CHEBI:15378"/>
        <dbReference type="ChEBI" id="CHEBI:16526"/>
        <dbReference type="ChEBI" id="CHEBI:29991"/>
        <dbReference type="ChEBI" id="CHEBI:57966"/>
        <dbReference type="EC" id="4.1.1.11"/>
    </reaction>
</comment>
<comment type="cofactor">
    <cofactor evidence="2">
        <name>pyruvate</name>
        <dbReference type="ChEBI" id="CHEBI:15361"/>
    </cofactor>
    <text evidence="2">Binds 1 pyruvoyl group covalently per subunit.</text>
</comment>
<comment type="activity regulation">
    <text evidence="3">Partially inhibited by POA but not by PZA or nicotinamide, probably also inhibited by calcium pantothenate.</text>
</comment>
<comment type="pathway">
    <text evidence="2">Cofactor biosynthesis; (R)-pantothenate biosynthesis; beta-alanine from L-aspartate: step 1/1.</text>
</comment>
<comment type="subunit">
    <text evidence="2">Heterooctamer of four alpha and four beta subunits.</text>
</comment>
<comment type="subcellular location">
    <subcellularLocation>
        <location evidence="2">Cytoplasm</location>
    </subcellularLocation>
</comment>
<comment type="PTM">
    <text evidence="2">Is synthesized initially as an inactive proenzyme, which is activated by self-cleavage at a specific serine bond to produce a beta-subunit with a hydroxyl group at its C-terminus and an alpha-subunit with a pyruvoyl group at its N-terminus.</text>
</comment>
<comment type="miscellaneous">
    <text evidence="1 3">30 POA or PZA-resistant mutants were identified in this gene by selection at pH 5.7 - 6.8. The antituberculosis activity of POA is antagonized by beta-alanine and pantothenate, the immediate and final reaction products of this enzyme (PubMed:26038753). Experiments in strain H37Rv suggest however that the PZA target may not be PanD (By similarity).</text>
</comment>
<comment type="similarity">
    <text evidence="2">Belongs to the PanD family.</text>
</comment>
<reference key="1">
    <citation type="journal article" date="2008" name="PLoS ONE">
        <title>Genetic basis of virulence attenuation revealed by comparative genomic analysis of Mycobacterium tuberculosis strain H37Ra versus H37Rv.</title>
        <authorList>
            <person name="Zheng H."/>
            <person name="Lu L."/>
            <person name="Wang B."/>
            <person name="Pu S."/>
            <person name="Zhang X."/>
            <person name="Zhu G."/>
            <person name="Shi W."/>
            <person name="Zhang L."/>
            <person name="Wang H."/>
            <person name="Wang S."/>
            <person name="Zhao G."/>
            <person name="Zhang Y."/>
        </authorList>
    </citation>
    <scope>NUCLEOTIDE SEQUENCE [LARGE SCALE GENOMIC DNA]</scope>
    <source>
        <strain>ATCC 25177 / H37Ra</strain>
    </source>
</reference>
<reference key="2">
    <citation type="journal article" date="2014" name="Emerg. Microbes Infect.">
        <title>Aspartate decarboxylase (PanD) as a new target of pyrazinamide in Mycobacterium tuberculosis.</title>
        <authorList>
            <person name="Shi W."/>
            <person name="Chen J."/>
            <person name="Feng J."/>
            <person name="Cui P."/>
            <person name="Zhang S."/>
            <person name="Weng X."/>
            <person name="Zhang W."/>
            <person name="Zhang Y."/>
        </authorList>
    </citation>
    <scope>FUNCTION</scope>
    <scope>ACTIVITY REGULATION</scope>
    <scope>POSSIBLE ANTIBIOTIC RESISTANCE</scope>
    <scope>MUTAGENESIS OF MET-117; 127-ASN--GLY-139; LEU-136 AND VAL-138</scope>
    <source>
        <strain>ATCC 25177 / H37Ra</strain>
    </source>
</reference>
<feature type="chain" id="PRO_0000307029" description="Aspartate 1-decarboxylase beta chain" evidence="2">
    <location>
        <begin position="1"/>
        <end position="24"/>
    </location>
</feature>
<feature type="chain" id="PRO_0000307030" description="Aspartate 1-decarboxylase alpha chain" evidence="2">
    <location>
        <begin position="25"/>
        <end position="139"/>
    </location>
</feature>
<feature type="active site" description="Schiff-base intermediate with substrate; via pyruvic acid" evidence="2">
    <location>
        <position position="25"/>
    </location>
</feature>
<feature type="active site" description="Proton donor" evidence="2">
    <location>
        <position position="58"/>
    </location>
</feature>
<feature type="binding site" evidence="2">
    <location>
        <position position="57"/>
    </location>
    <ligand>
        <name>substrate</name>
    </ligand>
</feature>
<feature type="binding site" evidence="2">
    <location>
        <begin position="73"/>
        <end position="75"/>
    </location>
    <ligand>
        <name>substrate</name>
    </ligand>
</feature>
<feature type="modified residue" description="Pyruvic acid (Ser)" evidence="2">
    <location>
        <position position="25"/>
    </location>
</feature>
<feature type="mutagenesis site" description="Confers POA resistance, partially inhibited by POA; identified in 24/30 mutants." evidence="3">
    <original>M</original>
    <variation>I</variation>
    <location>
        <position position="117"/>
    </location>
</feature>
<feature type="mutagenesis site" description="Confers POA resistance." evidence="3">
    <location>
        <begin position="127"/>
        <end position="139"/>
    </location>
</feature>
<feature type="mutagenesis site" description="Confers POA resistance." evidence="3">
    <original>L</original>
    <variation>R</variation>
    <location>
        <position position="136"/>
    </location>
</feature>
<feature type="mutagenesis site" description="Confers POA resistance." evidence="3">
    <original>V</original>
    <variation>A</variation>
    <variation>E</variation>
    <variation>G</variation>
    <location>
        <position position="138"/>
    </location>
</feature>
<proteinExistence type="evidence at protein level"/>
<keyword id="KW-0046">Antibiotic resistance</keyword>
<keyword id="KW-0068">Autocatalytic cleavage</keyword>
<keyword id="KW-0963">Cytoplasm</keyword>
<keyword id="KW-0210">Decarboxylase</keyword>
<keyword id="KW-0456">Lyase</keyword>
<keyword id="KW-0566">Pantothenate biosynthesis</keyword>
<keyword id="KW-0670">Pyruvate</keyword>
<keyword id="KW-1185">Reference proteome</keyword>
<keyword id="KW-0704">Schiff base</keyword>
<keyword id="KW-0865">Zymogen</keyword>
<gene>
    <name evidence="2" type="primary">panD</name>
    <name type="ordered locus">MRA_3640</name>
</gene>
<organism>
    <name type="scientific">Mycobacterium tuberculosis (strain ATCC 25177 / H37Ra)</name>
    <dbReference type="NCBI Taxonomy" id="419947"/>
    <lineage>
        <taxon>Bacteria</taxon>
        <taxon>Bacillati</taxon>
        <taxon>Actinomycetota</taxon>
        <taxon>Actinomycetes</taxon>
        <taxon>Mycobacteriales</taxon>
        <taxon>Mycobacteriaceae</taxon>
        <taxon>Mycobacterium</taxon>
        <taxon>Mycobacterium tuberculosis complex</taxon>
    </lineage>
</organism>
<protein>
    <recommendedName>
        <fullName evidence="2">Aspartate 1-decarboxylase</fullName>
        <ecNumber evidence="2">4.1.1.11</ecNumber>
    </recommendedName>
    <alternativeName>
        <fullName evidence="2">Aspartate alpha-decarboxylase</fullName>
    </alternativeName>
    <component>
        <recommendedName>
            <fullName evidence="2">Aspartate 1-decarboxylase beta chain</fullName>
        </recommendedName>
    </component>
    <component>
        <recommendedName>
            <fullName evidence="2">Aspartate 1-decarboxylase alpha chain</fullName>
        </recommendedName>
    </component>
</protein>
<sequence>MLRTMLKSKIHRATVTCADLHYVGSVTIDADLMDAADLLEGEQVTIVDIDNGARLVTYAITGERGSGVIGINGAAAHLVHPGDLVILIAYATMDDARARTYQPRIVFVDAYNKPIDMGHDPAFVPENAGELLDPRLGVG</sequence>
<accession>A5U8S6</accession>
<evidence type="ECO:0000250" key="1">
    <source>
        <dbReference type="UniProtKB" id="P9WIL3"/>
    </source>
</evidence>
<evidence type="ECO:0000255" key="2">
    <source>
        <dbReference type="HAMAP-Rule" id="MF_00446"/>
    </source>
</evidence>
<evidence type="ECO:0000269" key="3">
    <source>
    </source>
</evidence>
<name>PAND_MYCTA</name>
<dbReference type="EC" id="4.1.1.11" evidence="2"/>
<dbReference type="EMBL" id="CP000611">
    <property type="protein sequence ID" value="ABQ75426.1"/>
    <property type="molecule type" value="Genomic_DNA"/>
</dbReference>
<dbReference type="RefSeq" id="WP_003419523.1">
    <property type="nucleotide sequence ID" value="NZ_CP016972.1"/>
</dbReference>
<dbReference type="SMR" id="A5U8S6"/>
<dbReference type="KEGG" id="mra:MRA_3640"/>
<dbReference type="eggNOG" id="COG0853">
    <property type="taxonomic scope" value="Bacteria"/>
</dbReference>
<dbReference type="HOGENOM" id="CLU_115305_2_0_11"/>
<dbReference type="UniPathway" id="UPA00028">
    <property type="reaction ID" value="UER00002"/>
</dbReference>
<dbReference type="Proteomes" id="UP000001988">
    <property type="component" value="Chromosome"/>
</dbReference>
<dbReference type="GO" id="GO:0005829">
    <property type="term" value="C:cytosol"/>
    <property type="evidence" value="ECO:0007669"/>
    <property type="project" value="TreeGrafter"/>
</dbReference>
<dbReference type="GO" id="GO:0004068">
    <property type="term" value="F:aspartate 1-decarboxylase activity"/>
    <property type="evidence" value="ECO:0007669"/>
    <property type="project" value="UniProtKB-UniRule"/>
</dbReference>
<dbReference type="GO" id="GO:0006523">
    <property type="term" value="P:alanine biosynthetic process"/>
    <property type="evidence" value="ECO:0007669"/>
    <property type="project" value="InterPro"/>
</dbReference>
<dbReference type="GO" id="GO:0015940">
    <property type="term" value="P:pantothenate biosynthetic process"/>
    <property type="evidence" value="ECO:0007669"/>
    <property type="project" value="UniProtKB-UniRule"/>
</dbReference>
<dbReference type="GO" id="GO:0046677">
    <property type="term" value="P:response to antibiotic"/>
    <property type="evidence" value="ECO:0007669"/>
    <property type="project" value="UniProtKB-KW"/>
</dbReference>
<dbReference type="CDD" id="cd06919">
    <property type="entry name" value="Asp_decarbox"/>
    <property type="match status" value="1"/>
</dbReference>
<dbReference type="Gene3D" id="2.40.40.20">
    <property type="match status" value="1"/>
</dbReference>
<dbReference type="HAMAP" id="MF_00446">
    <property type="entry name" value="PanD"/>
    <property type="match status" value="1"/>
</dbReference>
<dbReference type="InterPro" id="IPR009010">
    <property type="entry name" value="Asp_de-COase-like_dom_sf"/>
</dbReference>
<dbReference type="InterPro" id="IPR003190">
    <property type="entry name" value="Asp_decarbox"/>
</dbReference>
<dbReference type="NCBIfam" id="TIGR00223">
    <property type="entry name" value="panD"/>
    <property type="match status" value="1"/>
</dbReference>
<dbReference type="PANTHER" id="PTHR21012">
    <property type="entry name" value="ASPARTATE 1-DECARBOXYLASE"/>
    <property type="match status" value="1"/>
</dbReference>
<dbReference type="PANTHER" id="PTHR21012:SF0">
    <property type="entry name" value="ASPARTATE 1-DECARBOXYLASE"/>
    <property type="match status" value="1"/>
</dbReference>
<dbReference type="Pfam" id="PF02261">
    <property type="entry name" value="Asp_decarbox"/>
    <property type="match status" value="1"/>
</dbReference>
<dbReference type="PIRSF" id="PIRSF006246">
    <property type="entry name" value="Asp_decarbox"/>
    <property type="match status" value="1"/>
</dbReference>
<dbReference type="SUPFAM" id="SSF50692">
    <property type="entry name" value="ADC-like"/>
    <property type="match status" value="1"/>
</dbReference>